<reference key="1">
    <citation type="submission" date="2009-01" db="EMBL/GenBank/DDBJ databases">
        <title>Complete sequence of Geobacter sp. FRC-32.</title>
        <authorList>
            <consortium name="US DOE Joint Genome Institute"/>
            <person name="Lucas S."/>
            <person name="Copeland A."/>
            <person name="Lapidus A."/>
            <person name="Glavina del Rio T."/>
            <person name="Dalin E."/>
            <person name="Tice H."/>
            <person name="Bruce D."/>
            <person name="Goodwin L."/>
            <person name="Pitluck S."/>
            <person name="Saunders E."/>
            <person name="Brettin T."/>
            <person name="Detter J.C."/>
            <person name="Han C."/>
            <person name="Larimer F."/>
            <person name="Land M."/>
            <person name="Hauser L."/>
            <person name="Kyrpides N."/>
            <person name="Ovchinnikova G."/>
            <person name="Kostka J."/>
            <person name="Richardson P."/>
        </authorList>
    </citation>
    <scope>NUCLEOTIDE SEQUENCE [LARGE SCALE GENOMIC DNA]</scope>
    <source>
        <strain>DSM 22248 / JCM 15807 / FRC-32</strain>
    </source>
</reference>
<comment type="function">
    <text evidence="1">Catalyzes the last two sequential reactions in the de novo biosynthetic pathway for UDP-N-acetylglucosamine (UDP-GlcNAc). The C-terminal domain catalyzes the transfer of acetyl group from acetyl coenzyme A to glucosamine-1-phosphate (GlcN-1-P) to produce N-acetylglucosamine-1-phosphate (GlcNAc-1-P), which is converted into UDP-GlcNAc by the transfer of uridine 5-monophosphate (from uridine 5-triphosphate), a reaction catalyzed by the N-terminal domain.</text>
</comment>
<comment type="catalytic activity">
    <reaction evidence="1">
        <text>alpha-D-glucosamine 1-phosphate + acetyl-CoA = N-acetyl-alpha-D-glucosamine 1-phosphate + CoA + H(+)</text>
        <dbReference type="Rhea" id="RHEA:13725"/>
        <dbReference type="ChEBI" id="CHEBI:15378"/>
        <dbReference type="ChEBI" id="CHEBI:57287"/>
        <dbReference type="ChEBI" id="CHEBI:57288"/>
        <dbReference type="ChEBI" id="CHEBI:57776"/>
        <dbReference type="ChEBI" id="CHEBI:58516"/>
        <dbReference type="EC" id="2.3.1.157"/>
    </reaction>
</comment>
<comment type="catalytic activity">
    <reaction evidence="1">
        <text>N-acetyl-alpha-D-glucosamine 1-phosphate + UTP + H(+) = UDP-N-acetyl-alpha-D-glucosamine + diphosphate</text>
        <dbReference type="Rhea" id="RHEA:13509"/>
        <dbReference type="ChEBI" id="CHEBI:15378"/>
        <dbReference type="ChEBI" id="CHEBI:33019"/>
        <dbReference type="ChEBI" id="CHEBI:46398"/>
        <dbReference type="ChEBI" id="CHEBI:57705"/>
        <dbReference type="ChEBI" id="CHEBI:57776"/>
        <dbReference type="EC" id="2.7.7.23"/>
    </reaction>
</comment>
<comment type="cofactor">
    <cofactor evidence="1">
        <name>Mg(2+)</name>
        <dbReference type="ChEBI" id="CHEBI:18420"/>
    </cofactor>
    <text evidence="1">Binds 1 Mg(2+) ion per subunit.</text>
</comment>
<comment type="pathway">
    <text evidence="1">Nucleotide-sugar biosynthesis; UDP-N-acetyl-alpha-D-glucosamine biosynthesis; N-acetyl-alpha-D-glucosamine 1-phosphate from alpha-D-glucosamine 6-phosphate (route II): step 2/2.</text>
</comment>
<comment type="pathway">
    <text evidence="1">Nucleotide-sugar biosynthesis; UDP-N-acetyl-alpha-D-glucosamine biosynthesis; UDP-N-acetyl-alpha-D-glucosamine from N-acetyl-alpha-D-glucosamine 1-phosphate: step 1/1.</text>
</comment>
<comment type="pathway">
    <text evidence="1">Bacterial outer membrane biogenesis; LPS lipid A biosynthesis.</text>
</comment>
<comment type="subunit">
    <text evidence="1">Homotrimer.</text>
</comment>
<comment type="subcellular location">
    <subcellularLocation>
        <location evidence="1">Cytoplasm</location>
    </subcellularLocation>
</comment>
<comment type="similarity">
    <text evidence="1">In the N-terminal section; belongs to the N-acetylglucosamine-1-phosphate uridyltransferase family.</text>
</comment>
<comment type="similarity">
    <text evidence="1">In the C-terminal section; belongs to the transferase hexapeptide repeat family.</text>
</comment>
<feature type="chain" id="PRO_1000186457" description="Bifunctional protein GlmU">
    <location>
        <begin position="1"/>
        <end position="457"/>
    </location>
</feature>
<feature type="region of interest" description="Pyrophosphorylase" evidence="1">
    <location>
        <begin position="1"/>
        <end position="232"/>
    </location>
</feature>
<feature type="region of interest" description="Linker" evidence="1">
    <location>
        <begin position="233"/>
        <end position="253"/>
    </location>
</feature>
<feature type="region of interest" description="N-acetyltransferase" evidence="1">
    <location>
        <begin position="254"/>
        <end position="457"/>
    </location>
</feature>
<feature type="active site" description="Proton acceptor" evidence="1">
    <location>
        <position position="366"/>
    </location>
</feature>
<feature type="binding site" evidence="1">
    <location>
        <begin position="9"/>
        <end position="12"/>
    </location>
    <ligand>
        <name>UDP-N-acetyl-alpha-D-glucosamine</name>
        <dbReference type="ChEBI" id="CHEBI:57705"/>
    </ligand>
</feature>
<feature type="binding site" evidence="1">
    <location>
        <position position="23"/>
    </location>
    <ligand>
        <name>UDP-N-acetyl-alpha-D-glucosamine</name>
        <dbReference type="ChEBI" id="CHEBI:57705"/>
    </ligand>
</feature>
<feature type="binding site" evidence="1">
    <location>
        <position position="75"/>
    </location>
    <ligand>
        <name>UDP-N-acetyl-alpha-D-glucosamine</name>
        <dbReference type="ChEBI" id="CHEBI:57705"/>
    </ligand>
</feature>
<feature type="binding site" evidence="1">
    <location>
        <begin position="80"/>
        <end position="81"/>
    </location>
    <ligand>
        <name>UDP-N-acetyl-alpha-D-glucosamine</name>
        <dbReference type="ChEBI" id="CHEBI:57705"/>
    </ligand>
</feature>
<feature type="binding site" evidence="1">
    <location>
        <position position="105"/>
    </location>
    <ligand>
        <name>Mg(2+)</name>
        <dbReference type="ChEBI" id="CHEBI:18420"/>
    </ligand>
</feature>
<feature type="binding site" evidence="1">
    <location>
        <position position="142"/>
    </location>
    <ligand>
        <name>UDP-N-acetyl-alpha-D-glucosamine</name>
        <dbReference type="ChEBI" id="CHEBI:57705"/>
    </ligand>
</feature>
<feature type="binding site" evidence="1">
    <location>
        <position position="157"/>
    </location>
    <ligand>
        <name>UDP-N-acetyl-alpha-D-glucosamine</name>
        <dbReference type="ChEBI" id="CHEBI:57705"/>
    </ligand>
</feature>
<feature type="binding site" evidence="1">
    <location>
        <position position="172"/>
    </location>
    <ligand>
        <name>UDP-N-acetyl-alpha-D-glucosamine</name>
        <dbReference type="ChEBI" id="CHEBI:57705"/>
    </ligand>
</feature>
<feature type="binding site" evidence="1">
    <location>
        <position position="230"/>
    </location>
    <ligand>
        <name>Mg(2+)</name>
        <dbReference type="ChEBI" id="CHEBI:18420"/>
    </ligand>
</feature>
<feature type="binding site" evidence="1">
    <location>
        <position position="230"/>
    </location>
    <ligand>
        <name>UDP-N-acetyl-alpha-D-glucosamine</name>
        <dbReference type="ChEBI" id="CHEBI:57705"/>
    </ligand>
</feature>
<feature type="binding site" evidence="1">
    <location>
        <position position="336"/>
    </location>
    <ligand>
        <name>UDP-N-acetyl-alpha-D-glucosamine</name>
        <dbReference type="ChEBI" id="CHEBI:57705"/>
    </ligand>
</feature>
<feature type="binding site" evidence="1">
    <location>
        <position position="354"/>
    </location>
    <ligand>
        <name>UDP-N-acetyl-alpha-D-glucosamine</name>
        <dbReference type="ChEBI" id="CHEBI:57705"/>
    </ligand>
</feature>
<feature type="binding site" evidence="1">
    <location>
        <position position="369"/>
    </location>
    <ligand>
        <name>UDP-N-acetyl-alpha-D-glucosamine</name>
        <dbReference type="ChEBI" id="CHEBI:57705"/>
    </ligand>
</feature>
<feature type="binding site" evidence="1">
    <location>
        <position position="380"/>
    </location>
    <ligand>
        <name>UDP-N-acetyl-alpha-D-glucosamine</name>
        <dbReference type="ChEBI" id="CHEBI:57705"/>
    </ligand>
</feature>
<feature type="binding site" evidence="1">
    <location>
        <begin position="389"/>
        <end position="390"/>
    </location>
    <ligand>
        <name>acetyl-CoA</name>
        <dbReference type="ChEBI" id="CHEBI:57288"/>
    </ligand>
</feature>
<feature type="binding site" evidence="1">
    <location>
        <position position="408"/>
    </location>
    <ligand>
        <name>acetyl-CoA</name>
        <dbReference type="ChEBI" id="CHEBI:57288"/>
    </ligand>
</feature>
<feature type="binding site" evidence="1">
    <location>
        <position position="426"/>
    </location>
    <ligand>
        <name>acetyl-CoA</name>
        <dbReference type="ChEBI" id="CHEBI:57288"/>
    </ligand>
</feature>
<feature type="binding site" evidence="1">
    <location>
        <position position="443"/>
    </location>
    <ligand>
        <name>acetyl-CoA</name>
        <dbReference type="ChEBI" id="CHEBI:57288"/>
    </ligand>
</feature>
<proteinExistence type="inferred from homology"/>
<gene>
    <name evidence="1" type="primary">glmU</name>
    <name type="ordered locus">Geob_3683</name>
</gene>
<organism>
    <name type="scientific">Geotalea daltonii (strain DSM 22248 / JCM 15807 / FRC-32)</name>
    <name type="common">Geobacter daltonii</name>
    <dbReference type="NCBI Taxonomy" id="316067"/>
    <lineage>
        <taxon>Bacteria</taxon>
        <taxon>Pseudomonadati</taxon>
        <taxon>Thermodesulfobacteriota</taxon>
        <taxon>Desulfuromonadia</taxon>
        <taxon>Geobacterales</taxon>
        <taxon>Geobacteraceae</taxon>
        <taxon>Geotalea</taxon>
    </lineage>
</organism>
<keyword id="KW-0012">Acyltransferase</keyword>
<keyword id="KW-0133">Cell shape</keyword>
<keyword id="KW-0961">Cell wall biogenesis/degradation</keyword>
<keyword id="KW-0963">Cytoplasm</keyword>
<keyword id="KW-0460">Magnesium</keyword>
<keyword id="KW-0479">Metal-binding</keyword>
<keyword id="KW-0511">Multifunctional enzyme</keyword>
<keyword id="KW-0548">Nucleotidyltransferase</keyword>
<keyword id="KW-0573">Peptidoglycan synthesis</keyword>
<keyword id="KW-1185">Reference proteome</keyword>
<keyword id="KW-0677">Repeat</keyword>
<keyword id="KW-0808">Transferase</keyword>
<sequence length="457" mass="48792">MAKVAAIVLAAGKGTRMKSELVKVMHPLSGMPMISWPVNVVREAGAAVITLVVGHQSEKVREFFADQGDIVFASQEEQLGTGHAVACCSEALSGFTGAILILCGDVPLITPETLQTFLEYHYRQQAVITVLTTCMDNPYGYGRVIKDAAGHVTEIVEEKDASAEQRQINEINSGIYCVDAGFLFTAVADLKNDNAQKEYYLTDIIKTAVAERRTCCAFPIADPMEVMGVNDRVQLAEAGRIIRVRINKALMVAGTTIIDPETTYIDHGVVVGRDTTIYPNVCISGGTVIGDNCVIESSAVIKGCKVGDCVTIKAGSVMEDSVIGNTVAIGPMAHLRSGTELRDEVKIGNFVETKKIIMGAGSKASHLTYLGDATIGSHVNIGCGTITCNYDGVKKHRTVIEDDVFVGSDVQFVAPVSIGRNSLIAAGTTVTKDVPPDSLAIARAPQVNKEGWKLKNK</sequence>
<evidence type="ECO:0000255" key="1">
    <source>
        <dbReference type="HAMAP-Rule" id="MF_01631"/>
    </source>
</evidence>
<name>GLMU_GEODF</name>
<protein>
    <recommendedName>
        <fullName evidence="1">Bifunctional protein GlmU</fullName>
    </recommendedName>
    <domain>
        <recommendedName>
            <fullName evidence="1">UDP-N-acetylglucosamine pyrophosphorylase</fullName>
            <ecNumber evidence="1">2.7.7.23</ecNumber>
        </recommendedName>
        <alternativeName>
            <fullName evidence="1">N-acetylglucosamine-1-phosphate uridyltransferase</fullName>
        </alternativeName>
    </domain>
    <domain>
        <recommendedName>
            <fullName evidence="1">Glucosamine-1-phosphate N-acetyltransferase</fullName>
            <ecNumber evidence="1">2.3.1.157</ecNumber>
        </recommendedName>
    </domain>
</protein>
<accession>B9M701</accession>
<dbReference type="EC" id="2.7.7.23" evidence="1"/>
<dbReference type="EC" id="2.3.1.157" evidence="1"/>
<dbReference type="EMBL" id="CP001390">
    <property type="protein sequence ID" value="ACM22022.1"/>
    <property type="molecule type" value="Genomic_DNA"/>
</dbReference>
<dbReference type="RefSeq" id="WP_012648748.1">
    <property type="nucleotide sequence ID" value="NC_011979.1"/>
</dbReference>
<dbReference type="SMR" id="B9M701"/>
<dbReference type="STRING" id="316067.Geob_3683"/>
<dbReference type="KEGG" id="geo:Geob_3683"/>
<dbReference type="eggNOG" id="COG1207">
    <property type="taxonomic scope" value="Bacteria"/>
</dbReference>
<dbReference type="HOGENOM" id="CLU_029499_15_2_7"/>
<dbReference type="OrthoDB" id="9775031at2"/>
<dbReference type="UniPathway" id="UPA00113">
    <property type="reaction ID" value="UER00532"/>
</dbReference>
<dbReference type="UniPathway" id="UPA00113">
    <property type="reaction ID" value="UER00533"/>
</dbReference>
<dbReference type="UniPathway" id="UPA00973"/>
<dbReference type="Proteomes" id="UP000007721">
    <property type="component" value="Chromosome"/>
</dbReference>
<dbReference type="GO" id="GO:0005737">
    <property type="term" value="C:cytoplasm"/>
    <property type="evidence" value="ECO:0007669"/>
    <property type="project" value="UniProtKB-SubCell"/>
</dbReference>
<dbReference type="GO" id="GO:0016020">
    <property type="term" value="C:membrane"/>
    <property type="evidence" value="ECO:0007669"/>
    <property type="project" value="GOC"/>
</dbReference>
<dbReference type="GO" id="GO:0019134">
    <property type="term" value="F:glucosamine-1-phosphate N-acetyltransferase activity"/>
    <property type="evidence" value="ECO:0007669"/>
    <property type="project" value="UniProtKB-UniRule"/>
</dbReference>
<dbReference type="GO" id="GO:0000287">
    <property type="term" value="F:magnesium ion binding"/>
    <property type="evidence" value="ECO:0007669"/>
    <property type="project" value="UniProtKB-UniRule"/>
</dbReference>
<dbReference type="GO" id="GO:0003977">
    <property type="term" value="F:UDP-N-acetylglucosamine diphosphorylase activity"/>
    <property type="evidence" value="ECO:0007669"/>
    <property type="project" value="UniProtKB-UniRule"/>
</dbReference>
<dbReference type="GO" id="GO:0000902">
    <property type="term" value="P:cell morphogenesis"/>
    <property type="evidence" value="ECO:0007669"/>
    <property type="project" value="UniProtKB-UniRule"/>
</dbReference>
<dbReference type="GO" id="GO:0071555">
    <property type="term" value="P:cell wall organization"/>
    <property type="evidence" value="ECO:0007669"/>
    <property type="project" value="UniProtKB-KW"/>
</dbReference>
<dbReference type="GO" id="GO:0009245">
    <property type="term" value="P:lipid A biosynthetic process"/>
    <property type="evidence" value="ECO:0007669"/>
    <property type="project" value="UniProtKB-UniRule"/>
</dbReference>
<dbReference type="GO" id="GO:0009252">
    <property type="term" value="P:peptidoglycan biosynthetic process"/>
    <property type="evidence" value="ECO:0007669"/>
    <property type="project" value="UniProtKB-UniRule"/>
</dbReference>
<dbReference type="GO" id="GO:0008360">
    <property type="term" value="P:regulation of cell shape"/>
    <property type="evidence" value="ECO:0007669"/>
    <property type="project" value="UniProtKB-KW"/>
</dbReference>
<dbReference type="GO" id="GO:0006048">
    <property type="term" value="P:UDP-N-acetylglucosamine biosynthetic process"/>
    <property type="evidence" value="ECO:0007669"/>
    <property type="project" value="UniProtKB-UniPathway"/>
</dbReference>
<dbReference type="CDD" id="cd02540">
    <property type="entry name" value="GT2_GlmU_N_bac"/>
    <property type="match status" value="1"/>
</dbReference>
<dbReference type="CDD" id="cd03353">
    <property type="entry name" value="LbH_GlmU_C"/>
    <property type="match status" value="1"/>
</dbReference>
<dbReference type="Gene3D" id="2.160.10.10">
    <property type="entry name" value="Hexapeptide repeat proteins"/>
    <property type="match status" value="1"/>
</dbReference>
<dbReference type="Gene3D" id="3.90.550.10">
    <property type="entry name" value="Spore Coat Polysaccharide Biosynthesis Protein SpsA, Chain A"/>
    <property type="match status" value="1"/>
</dbReference>
<dbReference type="HAMAP" id="MF_01631">
    <property type="entry name" value="GlmU"/>
    <property type="match status" value="1"/>
</dbReference>
<dbReference type="InterPro" id="IPR005882">
    <property type="entry name" value="Bifunctional_GlmU"/>
</dbReference>
<dbReference type="InterPro" id="IPR050065">
    <property type="entry name" value="GlmU-like"/>
</dbReference>
<dbReference type="InterPro" id="IPR038009">
    <property type="entry name" value="GlmU_C_LbH"/>
</dbReference>
<dbReference type="InterPro" id="IPR001451">
    <property type="entry name" value="Hexapep"/>
</dbReference>
<dbReference type="InterPro" id="IPR025877">
    <property type="entry name" value="MobA-like_NTP_Trfase"/>
</dbReference>
<dbReference type="InterPro" id="IPR029044">
    <property type="entry name" value="Nucleotide-diphossugar_trans"/>
</dbReference>
<dbReference type="InterPro" id="IPR011004">
    <property type="entry name" value="Trimer_LpxA-like_sf"/>
</dbReference>
<dbReference type="NCBIfam" id="TIGR01173">
    <property type="entry name" value="glmU"/>
    <property type="match status" value="1"/>
</dbReference>
<dbReference type="NCBIfam" id="NF010934">
    <property type="entry name" value="PRK14354.1"/>
    <property type="match status" value="1"/>
</dbReference>
<dbReference type="NCBIfam" id="NF010935">
    <property type="entry name" value="PRK14355.1"/>
    <property type="match status" value="1"/>
</dbReference>
<dbReference type="PANTHER" id="PTHR43584:SF3">
    <property type="entry name" value="BIFUNCTIONAL PROTEIN GLMU"/>
    <property type="match status" value="1"/>
</dbReference>
<dbReference type="PANTHER" id="PTHR43584">
    <property type="entry name" value="NUCLEOTIDYL TRANSFERASE"/>
    <property type="match status" value="1"/>
</dbReference>
<dbReference type="Pfam" id="PF00132">
    <property type="entry name" value="Hexapep"/>
    <property type="match status" value="2"/>
</dbReference>
<dbReference type="Pfam" id="PF12804">
    <property type="entry name" value="NTP_transf_3"/>
    <property type="match status" value="1"/>
</dbReference>
<dbReference type="SUPFAM" id="SSF53448">
    <property type="entry name" value="Nucleotide-diphospho-sugar transferases"/>
    <property type="match status" value="1"/>
</dbReference>
<dbReference type="SUPFAM" id="SSF51161">
    <property type="entry name" value="Trimeric LpxA-like enzymes"/>
    <property type="match status" value="1"/>
</dbReference>